<accession>B8J0B1</accession>
<evidence type="ECO:0000255" key="1">
    <source>
        <dbReference type="HAMAP-Rule" id="MF_00067"/>
    </source>
</evidence>
<protein>
    <recommendedName>
        <fullName evidence="1">Phosphoheptose isomerase</fullName>
        <ecNumber evidence="1">5.3.1.28</ecNumber>
    </recommendedName>
    <alternativeName>
        <fullName evidence="1">Sedoheptulose 7-phosphate isomerase</fullName>
    </alternativeName>
</protein>
<dbReference type="EC" id="5.3.1.28" evidence="1"/>
<dbReference type="EMBL" id="CP001358">
    <property type="protein sequence ID" value="ACL49188.1"/>
    <property type="molecule type" value="Genomic_DNA"/>
</dbReference>
<dbReference type="SMR" id="B8J0B1"/>
<dbReference type="STRING" id="525146.Ddes_1285"/>
<dbReference type="KEGG" id="dds:Ddes_1285"/>
<dbReference type="eggNOG" id="COG0279">
    <property type="taxonomic scope" value="Bacteria"/>
</dbReference>
<dbReference type="HOGENOM" id="CLU_080999_3_1_7"/>
<dbReference type="UniPathway" id="UPA00041">
    <property type="reaction ID" value="UER00436"/>
</dbReference>
<dbReference type="GO" id="GO:0005737">
    <property type="term" value="C:cytoplasm"/>
    <property type="evidence" value="ECO:0007669"/>
    <property type="project" value="UniProtKB-SubCell"/>
</dbReference>
<dbReference type="GO" id="GO:0097367">
    <property type="term" value="F:carbohydrate derivative binding"/>
    <property type="evidence" value="ECO:0007669"/>
    <property type="project" value="InterPro"/>
</dbReference>
<dbReference type="GO" id="GO:0008968">
    <property type="term" value="F:D-sedoheptulose 7-phosphate isomerase activity"/>
    <property type="evidence" value="ECO:0007669"/>
    <property type="project" value="UniProtKB-UniRule"/>
</dbReference>
<dbReference type="GO" id="GO:0008270">
    <property type="term" value="F:zinc ion binding"/>
    <property type="evidence" value="ECO:0007669"/>
    <property type="project" value="UniProtKB-UniRule"/>
</dbReference>
<dbReference type="GO" id="GO:0005975">
    <property type="term" value="P:carbohydrate metabolic process"/>
    <property type="evidence" value="ECO:0007669"/>
    <property type="project" value="UniProtKB-UniRule"/>
</dbReference>
<dbReference type="GO" id="GO:2001061">
    <property type="term" value="P:D-glycero-D-manno-heptose 7-phosphate biosynthetic process"/>
    <property type="evidence" value="ECO:0007669"/>
    <property type="project" value="UniProtKB-UniPathway"/>
</dbReference>
<dbReference type="CDD" id="cd05006">
    <property type="entry name" value="SIS_GmhA"/>
    <property type="match status" value="1"/>
</dbReference>
<dbReference type="Gene3D" id="3.40.50.10490">
    <property type="entry name" value="Glucose-6-phosphate isomerase like protein, domain 1"/>
    <property type="match status" value="1"/>
</dbReference>
<dbReference type="HAMAP" id="MF_00067">
    <property type="entry name" value="GmhA"/>
    <property type="match status" value="1"/>
</dbReference>
<dbReference type="InterPro" id="IPR035461">
    <property type="entry name" value="GmhA/DiaA"/>
</dbReference>
<dbReference type="InterPro" id="IPR004515">
    <property type="entry name" value="Phosphoheptose_Isoase"/>
</dbReference>
<dbReference type="InterPro" id="IPR001347">
    <property type="entry name" value="SIS_dom"/>
</dbReference>
<dbReference type="InterPro" id="IPR046348">
    <property type="entry name" value="SIS_dom_sf"/>
</dbReference>
<dbReference type="InterPro" id="IPR050099">
    <property type="entry name" value="SIS_GmhA/DiaA_subfam"/>
</dbReference>
<dbReference type="PANTHER" id="PTHR30390:SF6">
    <property type="entry name" value="DNAA INITIATOR-ASSOCIATING PROTEIN DIAA"/>
    <property type="match status" value="1"/>
</dbReference>
<dbReference type="PANTHER" id="PTHR30390">
    <property type="entry name" value="SEDOHEPTULOSE 7-PHOSPHATE ISOMERASE / DNAA INITIATOR-ASSOCIATING FACTOR FOR REPLICATION INITIATION"/>
    <property type="match status" value="1"/>
</dbReference>
<dbReference type="Pfam" id="PF13580">
    <property type="entry name" value="SIS_2"/>
    <property type="match status" value="1"/>
</dbReference>
<dbReference type="SUPFAM" id="SSF53697">
    <property type="entry name" value="SIS domain"/>
    <property type="match status" value="1"/>
</dbReference>
<dbReference type="PROSITE" id="PS51464">
    <property type="entry name" value="SIS"/>
    <property type="match status" value="1"/>
</dbReference>
<organism>
    <name type="scientific">Desulfovibrio desulfuricans (strain ATCC 27774 / DSM 6949 / MB)</name>
    <dbReference type="NCBI Taxonomy" id="525146"/>
    <lineage>
        <taxon>Bacteria</taxon>
        <taxon>Pseudomonadati</taxon>
        <taxon>Thermodesulfobacteriota</taxon>
        <taxon>Desulfovibrionia</taxon>
        <taxon>Desulfovibrionales</taxon>
        <taxon>Desulfovibrionaceae</taxon>
        <taxon>Desulfovibrio</taxon>
    </lineage>
</organism>
<feature type="chain" id="PRO_1000196995" description="Phosphoheptose isomerase">
    <location>
        <begin position="1"/>
        <end position="210"/>
    </location>
</feature>
<feature type="domain" description="SIS" evidence="1">
    <location>
        <begin position="38"/>
        <end position="202"/>
    </location>
</feature>
<feature type="binding site" evidence="1">
    <location>
        <begin position="53"/>
        <end position="55"/>
    </location>
    <ligand>
        <name>substrate</name>
    </ligand>
</feature>
<feature type="binding site" evidence="1">
    <location>
        <position position="62"/>
    </location>
    <ligand>
        <name>Zn(2+)</name>
        <dbReference type="ChEBI" id="CHEBI:29105"/>
    </ligand>
</feature>
<feature type="binding site" evidence="1">
    <location>
        <position position="66"/>
    </location>
    <ligand>
        <name>substrate</name>
    </ligand>
</feature>
<feature type="binding site" evidence="1">
    <location>
        <position position="66"/>
    </location>
    <ligand>
        <name>Zn(2+)</name>
        <dbReference type="ChEBI" id="CHEBI:29105"/>
    </ligand>
</feature>
<feature type="binding site" evidence="1">
    <location>
        <begin position="95"/>
        <end position="96"/>
    </location>
    <ligand>
        <name>substrate</name>
    </ligand>
</feature>
<feature type="binding site" evidence="1">
    <location>
        <begin position="121"/>
        <end position="123"/>
    </location>
    <ligand>
        <name>substrate</name>
    </ligand>
</feature>
<feature type="binding site" evidence="1">
    <location>
        <position position="126"/>
    </location>
    <ligand>
        <name>substrate</name>
    </ligand>
</feature>
<feature type="binding site" evidence="1">
    <location>
        <position position="173"/>
    </location>
    <ligand>
        <name>substrate</name>
    </ligand>
</feature>
<feature type="binding site" evidence="1">
    <location>
        <position position="173"/>
    </location>
    <ligand>
        <name>Zn(2+)</name>
        <dbReference type="ChEBI" id="CHEBI:29105"/>
    </ligand>
</feature>
<feature type="binding site" evidence="1">
    <location>
        <position position="181"/>
    </location>
    <ligand>
        <name>Zn(2+)</name>
        <dbReference type="ChEBI" id="CHEBI:29105"/>
    </ligand>
</feature>
<reference key="1">
    <citation type="submission" date="2009-01" db="EMBL/GenBank/DDBJ databases">
        <title>Complete sequence of Desulfovibrio desulfuricans subsp. desulfuricans str. ATCC 27774.</title>
        <authorList>
            <consortium name="US DOE Joint Genome Institute"/>
            <person name="Lucas S."/>
            <person name="Copeland A."/>
            <person name="Lapidus A."/>
            <person name="Glavina del Rio T."/>
            <person name="Tice H."/>
            <person name="Bruce D."/>
            <person name="Goodwin L."/>
            <person name="Pitluck S."/>
            <person name="Sims D."/>
            <person name="Lu M."/>
            <person name="Kiss H."/>
            <person name="Meineke L."/>
            <person name="Brettin T."/>
            <person name="Detter J.C."/>
            <person name="Han C."/>
            <person name="Larimer F."/>
            <person name="Land M."/>
            <person name="Hauser L."/>
            <person name="Kyrpides N."/>
            <person name="Ovchinnikova G."/>
            <person name="Hazen T.C."/>
        </authorList>
    </citation>
    <scope>NUCLEOTIDE SEQUENCE [LARGE SCALE GENOMIC DNA]</scope>
    <source>
        <strain>ATCC 27774 / DSM 6949 / MB</strain>
    </source>
</reference>
<gene>
    <name evidence="1" type="primary">gmhA</name>
    <name type="ordered locus">Ddes_1285</name>
</gene>
<sequence>MNDSALDIITAHARDGARLRETFFAEQATMLRETALRIAACLARGGKILLCGNGGSAADAQHLAAEFVNRFLVDRPALPALALTTDTSALTAIANDMDFSQVFSRQVEALGRKGDILVGISTSGNSPNVLAALEAARRIGMLTLGFTGRGGGRMAALCHMLVDVANPSTPLIQEIHITAGHLLCQLTDYYLFENVAALAPYLHADTVNED</sequence>
<keyword id="KW-0119">Carbohydrate metabolism</keyword>
<keyword id="KW-0963">Cytoplasm</keyword>
<keyword id="KW-0413">Isomerase</keyword>
<keyword id="KW-0479">Metal-binding</keyword>
<keyword id="KW-0862">Zinc</keyword>
<name>GMHA_DESDA</name>
<comment type="function">
    <text evidence="1">Catalyzes the isomerization of sedoheptulose 7-phosphate in D-glycero-D-manno-heptose 7-phosphate.</text>
</comment>
<comment type="catalytic activity">
    <reaction evidence="1">
        <text>2 D-sedoheptulose 7-phosphate = D-glycero-alpha-D-manno-heptose 7-phosphate + D-glycero-beta-D-manno-heptose 7-phosphate</text>
        <dbReference type="Rhea" id="RHEA:27489"/>
        <dbReference type="ChEBI" id="CHEBI:57483"/>
        <dbReference type="ChEBI" id="CHEBI:60203"/>
        <dbReference type="ChEBI" id="CHEBI:60204"/>
        <dbReference type="EC" id="5.3.1.28"/>
    </reaction>
</comment>
<comment type="cofactor">
    <cofactor evidence="1">
        <name>Zn(2+)</name>
        <dbReference type="ChEBI" id="CHEBI:29105"/>
    </cofactor>
    <text evidence="1">Binds 1 zinc ion per subunit.</text>
</comment>
<comment type="pathway">
    <text evidence="1">Carbohydrate biosynthesis; D-glycero-D-manno-heptose 7-phosphate biosynthesis; D-glycero-alpha-D-manno-heptose 7-phosphate and D-glycero-beta-D-manno-heptose 7-phosphate from sedoheptulose 7-phosphate: step 1/1.</text>
</comment>
<comment type="subunit">
    <text evidence="1">Homotetramer.</text>
</comment>
<comment type="subcellular location">
    <subcellularLocation>
        <location evidence="1">Cytoplasm</location>
    </subcellularLocation>
</comment>
<comment type="miscellaneous">
    <text evidence="1">The reaction produces a racemic mixture of D-glycero-alpha-D-manno-heptose 7-phosphate and D-glycero-beta-D-manno-heptose 7-phosphate.</text>
</comment>
<comment type="similarity">
    <text evidence="1">Belongs to the SIS family. GmhA subfamily.</text>
</comment>
<proteinExistence type="inferred from homology"/>